<sequence length="297" mass="33043">MVVIANAHNELIHDAVLDYYGKRLATCSSDKTIKIFEVEGETHKLIDTLTGHEGPVWRVDWAHPKFGTILASCSYDGKVLIWKEENGRWSQIAVHAVHSASVNSVQWAPHEYGPLLLVASSDGKVSVVEFKENGTTSPIIIDAHAIGVNSASWAPATIEEDGEHNGTKESRKFVTGGADNLVKIWKYNSDAQTYVLESTLEGHSDWVRDVAWSPTVLLRSYLASVSQDRTCIIWTQDNEQGPWKKTLLKEEKFPDVLWRASWSLSGNVLALSGGDNKVTLWKENLEGKWEPAGEVHQ</sequence>
<dbReference type="EMBL" id="L05929">
    <property type="protein sequence ID" value="AAA35028.1"/>
    <property type="molecule type" value="Genomic_DNA"/>
</dbReference>
<dbReference type="EMBL" id="U14913">
    <property type="protein sequence ID" value="AAB67426.1"/>
    <property type="molecule type" value="Genomic_DNA"/>
</dbReference>
<dbReference type="EMBL" id="BK006945">
    <property type="protein sequence ID" value="DAA09525.1"/>
    <property type="molecule type" value="Genomic_DNA"/>
</dbReference>
<dbReference type="PIR" id="A45442">
    <property type="entry name" value="A45442"/>
</dbReference>
<dbReference type="RefSeq" id="NP_013309.1">
    <property type="nucleotide sequence ID" value="NM_001182095.1"/>
</dbReference>
<dbReference type="PDB" id="2PM6">
    <property type="method" value="X-ray"/>
    <property type="resolution" value="2.45 A"/>
    <property type="chains" value="B/D=1-297"/>
</dbReference>
<dbReference type="PDB" id="2PM7">
    <property type="method" value="X-ray"/>
    <property type="resolution" value="2.35 A"/>
    <property type="chains" value="B/D=1-297"/>
</dbReference>
<dbReference type="PDB" id="2PM9">
    <property type="method" value="X-ray"/>
    <property type="resolution" value="3.30 A"/>
    <property type="chains" value="B=1-297"/>
</dbReference>
<dbReference type="PDB" id="3IKO">
    <property type="method" value="X-ray"/>
    <property type="resolution" value="3.20 A"/>
    <property type="chains" value="A/D/G=1-297"/>
</dbReference>
<dbReference type="PDB" id="3JRO">
    <property type="method" value="X-ray"/>
    <property type="resolution" value="4.00 A"/>
    <property type="chains" value="A=1-297"/>
</dbReference>
<dbReference type="PDB" id="3JRP">
    <property type="method" value="X-ray"/>
    <property type="resolution" value="2.60 A"/>
    <property type="chains" value="A=1-297"/>
</dbReference>
<dbReference type="PDB" id="3MZK">
    <property type="method" value="X-ray"/>
    <property type="resolution" value="2.69 A"/>
    <property type="chains" value="A/D=1-297"/>
</dbReference>
<dbReference type="PDB" id="3MZL">
    <property type="method" value="X-ray"/>
    <property type="resolution" value="2.80 A"/>
    <property type="chains" value="A/C/E/G=1-297"/>
</dbReference>
<dbReference type="PDB" id="4BZJ">
    <property type="method" value="EM"/>
    <property type="resolution" value="40.00 A"/>
    <property type="chains" value="B/F=2-292"/>
</dbReference>
<dbReference type="PDB" id="4BZK">
    <property type="method" value="EM"/>
    <property type="resolution" value="40.00 A"/>
    <property type="chains" value="B/F=1-297"/>
</dbReference>
<dbReference type="PDB" id="4XMM">
    <property type="method" value="X-ray"/>
    <property type="resolution" value="7.38 A"/>
    <property type="chains" value="A=1-297"/>
</dbReference>
<dbReference type="PDB" id="4XMN">
    <property type="method" value="X-ray"/>
    <property type="resolution" value="7.60 A"/>
    <property type="chains" value="A=1-297"/>
</dbReference>
<dbReference type="PDB" id="6ZG5">
    <property type="method" value="EM"/>
    <property type="resolution" value="40.00 A"/>
    <property type="chains" value="B/F=1-297"/>
</dbReference>
<dbReference type="PDB" id="6ZG6">
    <property type="method" value="EM"/>
    <property type="resolution" value="40.00 A"/>
    <property type="chains" value="B/D/F/H=1-297"/>
</dbReference>
<dbReference type="PDB" id="6ZL0">
    <property type="method" value="EM"/>
    <property type="resolution" value="40.00 A"/>
    <property type="chains" value="B/D=1-297"/>
</dbReference>
<dbReference type="PDB" id="7N84">
    <property type="method" value="EM"/>
    <property type="resolution" value="11.60 A"/>
    <property type="chains" value="d/o=1-297"/>
</dbReference>
<dbReference type="PDB" id="7N9F">
    <property type="method" value="EM"/>
    <property type="resolution" value="37.00 A"/>
    <property type="chains" value="d/k=1-297"/>
</dbReference>
<dbReference type="PDB" id="8ADL">
    <property type="method" value="EM"/>
    <property type="resolution" value="2.95 A"/>
    <property type="chains" value="H/P=1-297"/>
</dbReference>
<dbReference type="PDB" id="8TIE">
    <property type="method" value="EM"/>
    <property type="resolution" value="8.10 A"/>
    <property type="chains" value="d/o=1-297"/>
</dbReference>
<dbReference type="PDBsum" id="2PM6"/>
<dbReference type="PDBsum" id="2PM7"/>
<dbReference type="PDBsum" id="2PM9"/>
<dbReference type="PDBsum" id="3IKO"/>
<dbReference type="PDBsum" id="3JRO"/>
<dbReference type="PDBsum" id="3JRP"/>
<dbReference type="PDBsum" id="3MZK"/>
<dbReference type="PDBsum" id="3MZL"/>
<dbReference type="PDBsum" id="4BZJ"/>
<dbReference type="PDBsum" id="4BZK"/>
<dbReference type="PDBsum" id="4XMM"/>
<dbReference type="PDBsum" id="4XMN"/>
<dbReference type="PDBsum" id="6ZG5"/>
<dbReference type="PDBsum" id="6ZG6"/>
<dbReference type="PDBsum" id="6ZL0"/>
<dbReference type="PDBsum" id="7N84"/>
<dbReference type="PDBsum" id="7N9F"/>
<dbReference type="PDBsum" id="8ADL"/>
<dbReference type="PDBsum" id="8TIE"/>
<dbReference type="EMDB" id="EMD-11193"/>
<dbReference type="EMDB" id="EMD-11194"/>
<dbReference type="EMDB" id="EMD-11197"/>
<dbReference type="EMDB" id="EMD-11198"/>
<dbReference type="EMDB" id="EMD-11264"/>
<dbReference type="EMDB" id="EMD-15364"/>
<dbReference type="EMDB" id="EMD-24231"/>
<dbReference type="EMDB" id="EMD-24258"/>
<dbReference type="EMDB" id="EMD-41285"/>
<dbReference type="SMR" id="Q04491"/>
<dbReference type="BioGRID" id="31476">
    <property type="interactions" value="316"/>
</dbReference>
<dbReference type="ComplexPortal" id="CPX-2523">
    <property type="entry name" value="COPII vesicle coat complex"/>
</dbReference>
<dbReference type="ComplexPortal" id="CPX-3231">
    <property type="entry name" value="SEA complex"/>
</dbReference>
<dbReference type="ComplexPortal" id="CPX-824">
    <property type="entry name" value="Nuclear pore complex"/>
</dbReference>
<dbReference type="DIP" id="DIP-1826N"/>
<dbReference type="FunCoup" id="Q04491">
    <property type="interactions" value="1296"/>
</dbReference>
<dbReference type="IntAct" id="Q04491">
    <property type="interactions" value="31"/>
</dbReference>
<dbReference type="MINT" id="Q04491"/>
<dbReference type="STRING" id="4932.YLR208W"/>
<dbReference type="iPTMnet" id="Q04491"/>
<dbReference type="PaxDb" id="4932-YLR208W"/>
<dbReference type="PeptideAtlas" id="Q04491"/>
<dbReference type="EnsemblFungi" id="YLR208W_mRNA">
    <property type="protein sequence ID" value="YLR208W"/>
    <property type="gene ID" value="YLR208W"/>
</dbReference>
<dbReference type="GeneID" id="850905"/>
<dbReference type="KEGG" id="sce:YLR208W"/>
<dbReference type="AGR" id="SGD:S000004198"/>
<dbReference type="SGD" id="S000004198">
    <property type="gene designation" value="SEC13"/>
</dbReference>
<dbReference type="VEuPathDB" id="FungiDB:YLR208W"/>
<dbReference type="eggNOG" id="KOG1332">
    <property type="taxonomic scope" value="Eukaryota"/>
</dbReference>
<dbReference type="GeneTree" id="ENSGT00940000153393"/>
<dbReference type="HOGENOM" id="CLU_032441_0_1_1"/>
<dbReference type="InParanoid" id="Q04491"/>
<dbReference type="OMA" id="IWKEEGD"/>
<dbReference type="OrthoDB" id="364224at2759"/>
<dbReference type="BioCyc" id="YEAST:G3O-32326-MONOMER"/>
<dbReference type="Reactome" id="R-SCE-159236">
    <property type="pathway name" value="Transport of Mature mRNA derived from an Intron-Containing Transcript"/>
</dbReference>
<dbReference type="Reactome" id="R-SCE-204005">
    <property type="pathway name" value="COPII-mediated vesicle transport"/>
</dbReference>
<dbReference type="Reactome" id="R-SCE-3371453">
    <property type="pathway name" value="Regulation of HSF1-mediated heat shock response"/>
</dbReference>
<dbReference type="Reactome" id="R-SCE-4085377">
    <property type="pathway name" value="SUMOylation of SUMOylation proteins"/>
</dbReference>
<dbReference type="Reactome" id="R-SCE-4551638">
    <property type="pathway name" value="SUMOylation of chromatin organization proteins"/>
</dbReference>
<dbReference type="Reactome" id="R-SCE-4570464">
    <property type="pathway name" value="SUMOylation of RNA binding proteins"/>
</dbReference>
<dbReference type="BioGRID-ORCS" id="850905">
    <property type="hits" value="6 hits in 10 CRISPR screens"/>
</dbReference>
<dbReference type="EvolutionaryTrace" id="Q04491"/>
<dbReference type="PRO" id="PR:Q04491"/>
<dbReference type="Proteomes" id="UP000002311">
    <property type="component" value="Chromosome XII"/>
</dbReference>
<dbReference type="RNAct" id="Q04491">
    <property type="molecule type" value="protein"/>
</dbReference>
<dbReference type="GO" id="GO:0071944">
    <property type="term" value="C:cell periphery"/>
    <property type="evidence" value="ECO:0007005"/>
    <property type="project" value="SGD"/>
</dbReference>
<dbReference type="GO" id="GO:0030127">
    <property type="term" value="C:COPII vesicle coat"/>
    <property type="evidence" value="ECO:0000314"/>
    <property type="project" value="SGD"/>
</dbReference>
<dbReference type="GO" id="GO:0005783">
    <property type="term" value="C:endoplasmic reticulum"/>
    <property type="evidence" value="ECO:0000314"/>
    <property type="project" value="ComplexPortal"/>
</dbReference>
<dbReference type="GO" id="GO:0005789">
    <property type="term" value="C:endoplasmic reticulum membrane"/>
    <property type="evidence" value="ECO:0007669"/>
    <property type="project" value="UniProtKB-SubCell"/>
</dbReference>
<dbReference type="GO" id="GO:0005635">
    <property type="term" value="C:nuclear envelope"/>
    <property type="evidence" value="ECO:0000303"/>
    <property type="project" value="ComplexPortal"/>
</dbReference>
<dbReference type="GO" id="GO:0005643">
    <property type="term" value="C:nuclear pore"/>
    <property type="evidence" value="ECO:0000303"/>
    <property type="project" value="ComplexPortal"/>
</dbReference>
<dbReference type="GO" id="GO:0031080">
    <property type="term" value="C:nuclear pore outer ring"/>
    <property type="evidence" value="ECO:0000314"/>
    <property type="project" value="SGD"/>
</dbReference>
<dbReference type="GO" id="GO:0035859">
    <property type="term" value="C:Seh1-associated complex"/>
    <property type="evidence" value="ECO:0000314"/>
    <property type="project" value="SGD"/>
</dbReference>
<dbReference type="GO" id="GO:0005774">
    <property type="term" value="C:vacuolar membrane"/>
    <property type="evidence" value="ECO:0000303"/>
    <property type="project" value="ComplexPortal"/>
</dbReference>
<dbReference type="GO" id="GO:0005198">
    <property type="term" value="F:structural molecule activity"/>
    <property type="evidence" value="ECO:0000314"/>
    <property type="project" value="SGD"/>
</dbReference>
<dbReference type="GO" id="GO:0090114">
    <property type="term" value="P:COPII-coated vesicle budding"/>
    <property type="evidence" value="ECO:0000315"/>
    <property type="project" value="SGD"/>
</dbReference>
<dbReference type="GO" id="GO:0036503">
    <property type="term" value="P:ERAD pathway"/>
    <property type="evidence" value="ECO:0000315"/>
    <property type="project" value="SGD"/>
</dbReference>
<dbReference type="GO" id="GO:0051028">
    <property type="term" value="P:mRNA transport"/>
    <property type="evidence" value="ECO:0007669"/>
    <property type="project" value="UniProtKB-KW"/>
</dbReference>
<dbReference type="GO" id="GO:0051664">
    <property type="term" value="P:nuclear pore localization"/>
    <property type="evidence" value="ECO:0000315"/>
    <property type="project" value="SGD"/>
</dbReference>
<dbReference type="GO" id="GO:0006913">
    <property type="term" value="P:nucleocytoplasmic transport"/>
    <property type="evidence" value="ECO:0000303"/>
    <property type="project" value="ComplexPortal"/>
</dbReference>
<dbReference type="GO" id="GO:0045893">
    <property type="term" value="P:positive regulation of DNA-templated transcription"/>
    <property type="evidence" value="ECO:0000314"/>
    <property type="project" value="SGD"/>
</dbReference>
<dbReference type="GO" id="GO:1902953">
    <property type="term" value="P:positive regulation of ER to Golgi vesicle-mediated transport"/>
    <property type="evidence" value="ECO:0000314"/>
    <property type="project" value="ComplexPortal"/>
</dbReference>
<dbReference type="GO" id="GO:0070863">
    <property type="term" value="P:positive regulation of protein exit from endoplasmic reticulum"/>
    <property type="evidence" value="ECO:0000314"/>
    <property type="project" value="ComplexPortal"/>
</dbReference>
<dbReference type="GO" id="GO:0032008">
    <property type="term" value="P:positive regulation of TOR signaling"/>
    <property type="evidence" value="ECO:0000318"/>
    <property type="project" value="GO_Central"/>
</dbReference>
<dbReference type="GO" id="GO:1904263">
    <property type="term" value="P:positive regulation of TORC1 signaling"/>
    <property type="evidence" value="ECO:0000315"/>
    <property type="project" value="SGD"/>
</dbReference>
<dbReference type="GO" id="GO:0032527">
    <property type="term" value="P:protein exit from endoplasmic reticulum"/>
    <property type="evidence" value="ECO:0000318"/>
    <property type="project" value="GO_Central"/>
</dbReference>
<dbReference type="GO" id="GO:0006606">
    <property type="term" value="P:protein import into nucleus"/>
    <property type="evidence" value="ECO:0000318"/>
    <property type="project" value="GO_Central"/>
</dbReference>
<dbReference type="GO" id="GO:1903432">
    <property type="term" value="P:regulation of TORC1 signaling"/>
    <property type="evidence" value="ECO:0000314"/>
    <property type="project" value="ComplexPortal"/>
</dbReference>
<dbReference type="FunFam" id="2.130.10.10:FF:000017">
    <property type="entry name" value="SEC13 homolog (S. cerevisiae)"/>
    <property type="match status" value="1"/>
</dbReference>
<dbReference type="Gene3D" id="2.130.10.10">
    <property type="entry name" value="YVTN repeat-like/Quinoprotein amine dehydrogenase"/>
    <property type="match status" value="1"/>
</dbReference>
<dbReference type="InterPro" id="IPR037363">
    <property type="entry name" value="Sec13/Seh1_fam"/>
</dbReference>
<dbReference type="InterPro" id="IPR015943">
    <property type="entry name" value="WD40/YVTN_repeat-like_dom_sf"/>
</dbReference>
<dbReference type="InterPro" id="IPR036322">
    <property type="entry name" value="WD40_repeat_dom_sf"/>
</dbReference>
<dbReference type="InterPro" id="IPR001680">
    <property type="entry name" value="WD40_rpt"/>
</dbReference>
<dbReference type="PANTHER" id="PTHR11024">
    <property type="entry name" value="NUCLEAR PORE COMPLEX PROTEIN SEC13 / SEH1 FAMILY MEMBER"/>
    <property type="match status" value="1"/>
</dbReference>
<dbReference type="PANTHER" id="PTHR11024:SF2">
    <property type="entry name" value="PROTEIN SEC13 HOMOLOG"/>
    <property type="match status" value="1"/>
</dbReference>
<dbReference type="Pfam" id="PF00400">
    <property type="entry name" value="WD40"/>
    <property type="match status" value="4"/>
</dbReference>
<dbReference type="SMART" id="SM00320">
    <property type="entry name" value="WD40"/>
    <property type="match status" value="6"/>
</dbReference>
<dbReference type="SUPFAM" id="SSF50978">
    <property type="entry name" value="WD40 repeat-like"/>
    <property type="match status" value="1"/>
</dbReference>
<dbReference type="PROSITE" id="PS50082">
    <property type="entry name" value="WD_REPEATS_2"/>
    <property type="match status" value="3"/>
</dbReference>
<dbReference type="PROSITE" id="PS50294">
    <property type="entry name" value="WD_REPEATS_REGION"/>
    <property type="match status" value="1"/>
</dbReference>
<keyword id="KW-0002">3D-structure</keyword>
<keyword id="KW-0968">Cytoplasmic vesicle</keyword>
<keyword id="KW-0903">Direct protein sequencing</keyword>
<keyword id="KW-0256">Endoplasmic reticulum</keyword>
<keyword id="KW-0931">ER-Golgi transport</keyword>
<keyword id="KW-0472">Membrane</keyword>
<keyword id="KW-0509">mRNA transport</keyword>
<keyword id="KW-0906">Nuclear pore complex</keyword>
<keyword id="KW-0539">Nucleus</keyword>
<keyword id="KW-0653">Protein transport</keyword>
<keyword id="KW-1185">Reference proteome</keyword>
<keyword id="KW-0677">Repeat</keyword>
<keyword id="KW-0811">Translocation</keyword>
<keyword id="KW-0813">Transport</keyword>
<keyword id="KW-0926">Vacuole</keyword>
<keyword id="KW-0853">WD repeat</keyword>
<name>SEC13_YEAST</name>
<gene>
    <name type="primary">SEC13</name>
    <name type="synonym">ANU3</name>
    <name type="ordered locus">YLR208W</name>
    <name type="ORF">L8167.4</name>
</gene>
<reference key="1">
    <citation type="journal article" date="1993" name="J. Cell Biol.">
        <title>Cytosolic Sec13p complex is required for vesicle formation from the endoplasmic reticulum in vitro.</title>
        <authorList>
            <person name="Pryer N.K."/>
            <person name="Salama N.R."/>
            <person name="Schekman R.W."/>
            <person name="Kaiser C.A."/>
        </authorList>
    </citation>
    <scope>NUCLEOTIDE SEQUENCE [GENOMIC DNA]</scope>
    <scope>MUTAGENESIS OF SER-224; TRP-262 AND GLY-266</scope>
</reference>
<reference key="2">
    <citation type="journal article" date="1997" name="Nature">
        <title>The nucleotide sequence of Saccharomyces cerevisiae chromosome XII.</title>
        <authorList>
            <person name="Johnston M."/>
            <person name="Hillier L.W."/>
            <person name="Riles L."/>
            <person name="Albermann K."/>
            <person name="Andre B."/>
            <person name="Ansorge W."/>
            <person name="Benes V."/>
            <person name="Brueckner M."/>
            <person name="Delius H."/>
            <person name="Dubois E."/>
            <person name="Duesterhoeft A."/>
            <person name="Entian K.-D."/>
            <person name="Floeth M."/>
            <person name="Goffeau A."/>
            <person name="Hebling U."/>
            <person name="Heumann K."/>
            <person name="Heuss-Neitzel D."/>
            <person name="Hilbert H."/>
            <person name="Hilger F."/>
            <person name="Kleine K."/>
            <person name="Koetter P."/>
            <person name="Louis E.J."/>
            <person name="Messenguy F."/>
            <person name="Mewes H.-W."/>
            <person name="Miosga T."/>
            <person name="Moestl D."/>
            <person name="Mueller-Auer S."/>
            <person name="Nentwich U."/>
            <person name="Obermaier B."/>
            <person name="Piravandi E."/>
            <person name="Pohl T.M."/>
            <person name="Portetelle D."/>
            <person name="Purnelle B."/>
            <person name="Rechmann S."/>
            <person name="Rieger M."/>
            <person name="Rinke M."/>
            <person name="Rose M."/>
            <person name="Scharfe M."/>
            <person name="Scherens B."/>
            <person name="Scholler P."/>
            <person name="Schwager C."/>
            <person name="Schwarz S."/>
            <person name="Underwood A.P."/>
            <person name="Urrestarazu L.A."/>
            <person name="Vandenbol M."/>
            <person name="Verhasselt P."/>
            <person name="Vierendeels F."/>
            <person name="Voet M."/>
            <person name="Volckaert G."/>
            <person name="Voss H."/>
            <person name="Wambutt R."/>
            <person name="Wedler E."/>
            <person name="Wedler H."/>
            <person name="Zimmermann F.K."/>
            <person name="Zollner A."/>
            <person name="Hani J."/>
            <person name="Hoheisel J.D."/>
        </authorList>
    </citation>
    <scope>NUCLEOTIDE SEQUENCE [LARGE SCALE GENOMIC DNA]</scope>
    <source>
        <strain>ATCC 204508 / S288c</strain>
    </source>
</reference>
<reference key="3">
    <citation type="journal article" date="2014" name="G3 (Bethesda)">
        <title>The reference genome sequence of Saccharomyces cerevisiae: Then and now.</title>
        <authorList>
            <person name="Engel S.R."/>
            <person name="Dietrich F.S."/>
            <person name="Fisk D.G."/>
            <person name="Binkley G."/>
            <person name="Balakrishnan R."/>
            <person name="Costanzo M.C."/>
            <person name="Dwight S.S."/>
            <person name="Hitz B.C."/>
            <person name="Karra K."/>
            <person name="Nash R.S."/>
            <person name="Weng S."/>
            <person name="Wong E.D."/>
            <person name="Lloyd P."/>
            <person name="Skrzypek M.S."/>
            <person name="Miyasato S.R."/>
            <person name="Simison M."/>
            <person name="Cherry J.M."/>
        </authorList>
    </citation>
    <scope>GENOME REANNOTATION</scope>
    <source>
        <strain>ATCC 204508 / S288c</strain>
    </source>
</reference>
<reference key="4">
    <citation type="journal article" date="1996" name="Cell">
        <title>A novel complex of nucleoporins, which includes Sec13p and a Sec13p homolog, is essential for normal nuclear pores.</title>
        <authorList>
            <person name="Siniossoglou S."/>
            <person name="Wimmer C."/>
            <person name="Rieger M."/>
            <person name="Doye V."/>
            <person name="Tekotte H."/>
            <person name="Weise C."/>
            <person name="Emig S."/>
            <person name="Segref A."/>
            <person name="Hurt E.C."/>
        </authorList>
    </citation>
    <scope>PROTEIN SEQUENCE OF 35-39; 79-83; 125-131; 278-282 AND 289-293</scope>
    <scope>FUNCTION IN NUCLEAR MRNA EXPORT</scope>
</reference>
<reference key="5">
    <citation type="journal article" date="1980" name="Cell">
        <title>Identification of 23 complementation groups required for post-translational events in the yeast secretory pathway.</title>
        <authorList>
            <person name="Novick P."/>
            <person name="Field C."/>
            <person name="Schekman R.W."/>
        </authorList>
    </citation>
    <scope>FUNCTION</scope>
</reference>
<reference key="6">
    <citation type="journal article" date="1981" name="Cell">
        <title>Order of events in the yeast secretory pathway.</title>
        <authorList>
            <person name="Novick P."/>
            <person name="Ferro S."/>
            <person name="Schekman R.W."/>
        </authorList>
    </citation>
    <scope>FUNCTION</scope>
</reference>
<reference key="7">
    <citation type="journal article" date="1990" name="Cell">
        <title>Distinct sets of SEC genes govern transport vesicle formation and fusion early in the secretory pathway.</title>
        <authorList>
            <person name="Kaiser C.A."/>
            <person name="Schekman R.W."/>
        </authorList>
    </citation>
    <scope>FUNCTION</scope>
</reference>
<reference key="8">
    <citation type="journal article" date="1995" name="Cell">
        <title>COPI- and COPII-coated vesicles bud directly from the endoplasmic reticulum in yeast.</title>
        <authorList>
            <person name="Bednarek S.Y."/>
            <person name="Ravazzola M."/>
            <person name="Hosobuchi M."/>
            <person name="Amherdt M."/>
            <person name="Perrelet A."/>
            <person name="Schekman R.W."/>
            <person name="Orci L."/>
        </authorList>
    </citation>
    <scope>FUNCTION</scope>
    <scope>SUBCELLULAR LOCATION</scope>
</reference>
<reference key="9">
    <citation type="journal article" date="1996" name="J. Cell Biol.">
        <title>Amino acid permeases require COPII components and the ER resident membrane protein Shr3p for packaging into transport vesicles in vitro.</title>
        <authorList>
            <person name="Kuehn M.J."/>
            <person name="Schekman R.W."/>
            <person name="Ljungdahl P.O."/>
        </authorList>
    </citation>
    <scope>FUNCTION</scope>
</reference>
<reference key="10">
    <citation type="journal article" date="1997" name="Genetics">
        <title>Control of amino acid permease sorting in the late secretory pathway of Saccharomyces cerevisiae by SEC13, LST4, LST7 and LST8.</title>
        <authorList>
            <person name="Roberg K.J."/>
            <person name="Bickel S."/>
            <person name="Rowley N."/>
            <person name="Kaiser C.A."/>
        </authorList>
    </citation>
    <scope>FUNCTION</scope>
</reference>
<reference key="11">
    <citation type="journal article" date="1997" name="J. Biol. Chem.">
        <title>COPII subunit interactions in the assembly of the vesicle coat.</title>
        <authorList>
            <person name="Shaywitz D.A."/>
            <person name="Espenshade P.J."/>
            <person name="Gimeno R.E."/>
            <person name="Kaiser C.A."/>
        </authorList>
    </citation>
    <scope>IDENTIFICATION IN THE COPII COAT</scope>
    <scope>INTERACTION WITH SEC16</scope>
</reference>
<reference key="12">
    <citation type="journal article" date="1997" name="J. Cell Biol.">
        <title>Physiological regulation of membrane protein sorting late in the secretory pathway of Saccharomyces cerevisiae.</title>
        <authorList>
            <person name="Roberg K.J."/>
            <person name="Rowley N."/>
            <person name="Kaiser C.A."/>
        </authorList>
    </citation>
    <scope>FUNCTION</scope>
</reference>
<reference key="13">
    <citation type="journal article" date="1997" name="J. Cell Sci.">
        <title>Specific requirements for the ER to Golgi transport of GPI-anchored proteins in yeast.</title>
        <authorList>
            <person name="Suetterlin C."/>
            <person name="Doering T.L."/>
            <person name="Schimmoeller F."/>
            <person name="Schroeder S."/>
            <person name="Riezman H."/>
        </authorList>
    </citation>
    <scope>FUNCTION</scope>
</reference>
<reference key="14">
    <citation type="journal article" date="1997" name="Mol. Biol. Cell">
        <title>Sec31 encodes an essential component of the COPII coat required for transport vesicle budding from the endoplasmic reticulum.</title>
        <authorList>
            <person name="Salama N.R."/>
            <person name="Chuang J.S."/>
            <person name="Schekman R.W."/>
        </authorList>
    </citation>
    <scope>INTERACTION WITH SEC31</scope>
</reference>
<reference key="15">
    <citation type="journal article" date="1997" name="Proc. Natl. Acad. Sci. U.S.A.">
        <title>Selective packaging of cargo molecules into endoplasmic reticulum-derived COPII vesicles.</title>
        <authorList>
            <person name="Campbell J.L."/>
            <person name="Schekman R.W."/>
        </authorList>
    </citation>
    <scope>FUNCTION</scope>
</reference>
<reference key="16">
    <citation type="journal article" date="1998" name="Cell">
        <title>COPII-coated vesicle formation reconstituted with purified coat proteins and chemically defined liposomes.</title>
        <authorList>
            <person name="Matsuoka K."/>
            <person name="Orci L."/>
            <person name="Amherdt M."/>
            <person name="Bednarek S.Y."/>
            <person name="Hamamoto S."/>
            <person name="Schekman R.W."/>
            <person name="Yeung T."/>
        </authorList>
    </citation>
    <scope>SUBUNIT</scope>
    <scope>SUBCELLULAR LOCATION</scope>
</reference>
<reference key="17">
    <citation type="journal article" date="1999" name="Mol. Biol. Cell">
        <title>Shr3p mediates specific COPII coatomer-cargo interactions required for the packaging of amino acid permeases into ER-derived transport vesicles.</title>
        <authorList>
            <person name="Gilstring C.F."/>
            <person name="Melin-Larsson M."/>
            <person name="Ljungdahl P.O."/>
        </authorList>
    </citation>
    <scope>INTERACTION WITH SHR3</scope>
</reference>
<reference key="18">
    <citation type="journal article" date="2000" name="J. Cell Biol.">
        <title>The yeast nuclear pore complex: composition, architecture, and transport mechanism.</title>
        <authorList>
            <person name="Rout M.P."/>
            <person name="Aitchison J.D."/>
            <person name="Suprapto A."/>
            <person name="Hjertaas K."/>
            <person name="Zhao Y."/>
            <person name="Chait B.T."/>
        </authorList>
    </citation>
    <scope>FUNCTION</scope>
    <scope>IDENTIFICATION IN THE NUCLEAR PORE COMPLEX</scope>
    <scope>SUBCELLULAR LOCATION</scope>
</reference>
<reference key="19">
    <citation type="journal article" date="2000" name="Methods">
        <title>The use of liposomes to study COPII- and COPI-coated vesicle formation and membrane protein sorting.</title>
        <authorList>
            <person name="Matsuoka K."/>
            <person name="Schekman R.W."/>
        </authorList>
    </citation>
    <scope>FUNCTION</scope>
    <scope>SUBCELLULAR LOCATION</scope>
</reference>
<reference key="20">
    <citation type="journal article" date="2000" name="J. Cell Biol.">
        <title>Structure and assembly of the Nup84p complex.</title>
        <authorList>
            <person name="Siniossoglou S."/>
            <person name="Lutzmann M."/>
            <person name="Santos-Rosa H."/>
            <person name="Leonard K."/>
            <person name="Mueller S."/>
            <person name="Aebi U."/>
            <person name="Hurt E.C."/>
        </authorList>
    </citation>
    <scope>FUNCTION</scope>
    <scope>LOCALIZATION AT NPC</scope>
    <scope>ROLE IN NPC BIOGENESIS</scope>
</reference>
<reference key="21">
    <citation type="journal article" date="2001" name="J. Biol. Chem.">
        <title>Distinct roles for the cytoplasmic tail sequences of Emp24p and Erv25p in transport between the endoplasmic reticulum and Golgi complex.</title>
        <authorList>
            <person name="Belden W.J."/>
            <person name="Barlowe C."/>
        </authorList>
    </citation>
    <scope>INTERACTION WITH EMP24 AND ERV25</scope>
</reference>
<reference key="22">
    <citation type="journal article" date="2001" name="Nat. Cell Biol.">
        <title>Dynamics of the COPII coat with GTP and stable analogues.</title>
        <authorList>
            <person name="Antonny B."/>
            <person name="Madden D.T."/>
            <person name="Hamamoto S."/>
            <person name="Orci L."/>
            <person name="Schekman R.W."/>
        </authorList>
    </citation>
    <scope>IDENTIFICATION IN THE COPII COAT</scope>
</reference>
<reference key="23">
    <citation type="journal article" date="2001" name="Proc. Natl. Acad. Sci. U.S.A.">
        <title>Structure of the Sec23p/24p and Sec13p/31p complexes of COPII.</title>
        <authorList>
            <person name="Lederkremer G.Z."/>
            <person name="Cheng Y."/>
            <person name="Petre B.M."/>
            <person name="Vogan E."/>
            <person name="Springer S."/>
            <person name="Schekman R.W."/>
            <person name="Walz T."/>
            <person name="Kirchhausen T."/>
        </authorList>
    </citation>
    <scope>FUNCTION</scope>
    <scope>HETEROTETRAMERIC COMPLEX WITH SEC31</scope>
</reference>
<reference key="24">
    <citation type="journal article" date="2001" name="Proc. Natl. Acad. Sci. U.S.A.">
        <title>Surface structure of the COPII-coated vesicle.</title>
        <authorList>
            <person name="Matsuoka K."/>
            <person name="Schekman R.W."/>
            <person name="Orci L."/>
            <person name="Heuser J.E."/>
        </authorList>
    </citation>
    <scope>FUNCTION</scope>
    <scope>COPII FORMATION AND STRUCTURE</scope>
</reference>
<reference key="25">
    <citation type="journal article" date="2002" name="BMC Genet.">
        <title>Isolation and characterization of new Saccharomyces cerevisiae mutants perturbed in nuclear pore complex assembly.</title>
        <authorList>
            <person name="Ryan K.J."/>
            <person name="Wente S.R."/>
        </authorList>
    </citation>
    <scope>FUNCTION</scope>
    <scope>ER MEMBRANE AND NUCLEAR ENVELOPE MORPHOLOGY</scope>
    <scope>NPC ASSEMBLY AND DISTRIBUTION</scope>
    <scope>MUTAGENESIS OF GLY-176</scope>
</reference>
<reference key="26">
    <citation type="journal article" date="2002" name="EMBO J.">
        <title>Modular self-assembly of a Y-shaped multiprotein complex from seven nucleoporins.</title>
        <authorList>
            <person name="Lutzmann M."/>
            <person name="Kunze R."/>
            <person name="Buerer A."/>
            <person name="Aebi U."/>
            <person name="Hurt E.C."/>
        </authorList>
    </citation>
    <scope>FUNCTION</scope>
    <scope>NUP84 NPC SUBCOMPLEX ASSEMBLY/STRUCTURE</scope>
</reference>
<reference key="27">
    <citation type="journal article" date="2002" name="J. Cell Biol.">
        <title>Sec16p potentiates the action of COPII proteins to bud transport vesicles.</title>
        <authorList>
            <person name="Supek F."/>
            <person name="Madden D.T."/>
            <person name="Hamamoto S."/>
            <person name="Orci L."/>
            <person name="Schekman R.W."/>
        </authorList>
    </citation>
    <scope>SUBCELLULAR LOCATION</scope>
</reference>
<reference key="28">
    <citation type="journal article" date="2002" name="Mol. Biol. Cell">
        <title>Selective protein exit from yeast endoplasmic reticulum in absence of functional COPII coat component Sec13p.</title>
        <authorList>
            <person name="Fatal N."/>
            <person name="Suntio T."/>
            <person name="Makarow M."/>
        </authorList>
    </citation>
    <scope>FUNCTION</scope>
</reference>
<reference key="29">
    <citation type="journal article" date="2003" name="EMBO Rep.">
        <title>Self-assembly of minimal COPII cages.</title>
        <authorList>
            <person name="Antonny B."/>
            <person name="Gounon P."/>
            <person name="Schekman R.W."/>
            <person name="Orci L."/>
        </authorList>
    </citation>
    <scope>STRUCTURE OF THE COPII COMPLEX</scope>
</reference>
<reference key="30">
    <citation type="journal article" date="2003" name="Nature">
        <title>Global analysis of protein localization in budding yeast.</title>
        <authorList>
            <person name="Huh W.-K."/>
            <person name="Falvo J.V."/>
            <person name="Gerke L.C."/>
            <person name="Carroll A.S."/>
            <person name="Howson R.W."/>
            <person name="Weissman J.S."/>
            <person name="O'Shea E.K."/>
        </authorList>
    </citation>
    <scope>SUBCELLULAR LOCATION [LARGE SCALE ANALYSIS]</scope>
</reference>
<reference key="31">
    <citation type="journal article" date="2003" name="Nature">
        <title>Global analysis of protein expression in yeast.</title>
        <authorList>
            <person name="Ghaemmaghami S."/>
            <person name="Huh W.-K."/>
            <person name="Bower K."/>
            <person name="Howson R.W."/>
            <person name="Belle A."/>
            <person name="Dephoure N."/>
            <person name="O'Shea E.K."/>
            <person name="Weissman J.S."/>
        </authorList>
    </citation>
    <scope>LEVEL OF PROTEIN EXPRESSION [LARGE SCALE ANALYSIS]</scope>
</reference>
<reference key="32">
    <citation type="journal article" date="2003" name="Prog. Biophys. Mol. Biol.">
        <title>Intracellular sorting and transport of proteins.</title>
        <authorList>
            <person name="van Vliet C."/>
            <person name="Thomas E.C."/>
            <person name="Merino-Trigo A."/>
            <person name="Teasdale R.D."/>
            <person name="Gleeson P.A."/>
        </authorList>
    </citation>
    <scope>REVIEW</scope>
</reference>
<reference key="33">
    <citation type="journal article" date="2003" name="Trends Cell Biol.">
        <title>Signals for COPII-dependent export from the ER: what's the ticket out?</title>
        <authorList>
            <person name="Barlowe C."/>
        </authorList>
    </citation>
    <scope>REVIEW</scope>
</reference>
<reference key="34">
    <citation type="journal article" date="2003" name="Dev. Cell">
        <title>Peering through the pore: nuclear pore complex structure, assembly, and function.</title>
        <authorList>
            <person name="Suntharalingam M."/>
            <person name="Wente S.R."/>
        </authorList>
    </citation>
    <scope>REVIEW</scope>
</reference>
<reference key="35">
    <citation type="journal article" date="2004" name="J. Biol. Chem.">
        <title>Reconstitution of coat protein complex II (COPII) vesicle formation from cargo-reconstituted proteoliposomes reveals the potential role of GTP hydrolysis by Sar1p in protein sorting.</title>
        <authorList>
            <person name="Sato K."/>
            <person name="Nakano A."/>
        </authorList>
    </citation>
    <scope>COPII COMPLEX ASSEMBLY</scope>
    <scope>FUNCTION OF THE COPII COMPLEX</scope>
</reference>
<reference key="36">
    <citation type="journal article" date="2011" name="Mol. Cell. Proteomics">
        <title>A conserved coatomer-related complex containing Sec13 and Seh1 dynamically associates with the vacuole in Saccharomyces cerevisiae.</title>
        <authorList>
            <person name="Dokudovskaya S."/>
            <person name="Waharte F."/>
            <person name="Schlessinger A."/>
            <person name="Pieper U."/>
            <person name="Devos D.P."/>
            <person name="Cristea I.M."/>
            <person name="Williams R."/>
            <person name="Salamero J."/>
            <person name="Chait B.T."/>
            <person name="Sali A."/>
            <person name="Field M.C."/>
            <person name="Rout M.P."/>
            <person name="Dargemont C."/>
        </authorList>
    </citation>
    <scope>SUBCELLULAR LOCATION</scope>
    <scope>IDENTIFICATION IN THE SEA COMPLEX</scope>
    <scope>FUNCTION</scope>
</reference>
<reference key="37">
    <citation type="journal article" date="2012" name="Proc. Natl. Acad. Sci. U.S.A.">
        <title>N-terminal acetylome analyses and functional insights of the N-terminal acetyltransferase NatB.</title>
        <authorList>
            <person name="Van Damme P."/>
            <person name="Lasa M."/>
            <person name="Polevoda B."/>
            <person name="Gazquez C."/>
            <person name="Elosegui-Artola A."/>
            <person name="Kim D.S."/>
            <person name="De Juan-Pardo E."/>
            <person name="Demeyer K."/>
            <person name="Hole K."/>
            <person name="Larrea E."/>
            <person name="Timmerman E."/>
            <person name="Prieto J."/>
            <person name="Arnesen T."/>
            <person name="Sherman F."/>
            <person name="Gevaert K."/>
            <person name="Aldabe R."/>
        </authorList>
    </citation>
    <scope>IDENTIFICATION BY MASS SPECTROMETRY [LARGE SCALE ANALYSIS]</scope>
</reference>
<organism>
    <name type="scientific">Saccharomyces cerevisiae (strain ATCC 204508 / S288c)</name>
    <name type="common">Baker's yeast</name>
    <dbReference type="NCBI Taxonomy" id="559292"/>
    <lineage>
        <taxon>Eukaryota</taxon>
        <taxon>Fungi</taxon>
        <taxon>Dikarya</taxon>
        <taxon>Ascomycota</taxon>
        <taxon>Saccharomycotina</taxon>
        <taxon>Saccharomycetes</taxon>
        <taxon>Saccharomycetales</taxon>
        <taxon>Saccharomycetaceae</taxon>
        <taxon>Saccharomyces</taxon>
    </lineage>
</organism>
<protein>
    <recommendedName>
        <fullName>Protein transport protein SEC13</fullName>
    </recommendedName>
</protein>
<proteinExistence type="evidence at protein level"/>
<accession>Q04491</accession>
<accession>D6VYK9</accession>
<evidence type="ECO:0000269" key="1">
    <source>
    </source>
</evidence>
<evidence type="ECO:0000269" key="2">
    <source>
    </source>
</evidence>
<evidence type="ECO:0000269" key="3">
    <source>
    </source>
</evidence>
<evidence type="ECO:0000269" key="4">
    <source>
    </source>
</evidence>
<evidence type="ECO:0000269" key="5">
    <source>
    </source>
</evidence>
<evidence type="ECO:0000269" key="6">
    <source>
    </source>
</evidence>
<evidence type="ECO:0000269" key="7">
    <source>
    </source>
</evidence>
<evidence type="ECO:0000269" key="8">
    <source>
    </source>
</evidence>
<evidence type="ECO:0000269" key="9">
    <source>
    </source>
</evidence>
<evidence type="ECO:0000269" key="10">
    <source>
    </source>
</evidence>
<evidence type="ECO:0000269" key="11">
    <source>
    </source>
</evidence>
<evidence type="ECO:0000269" key="12">
    <source>
    </source>
</evidence>
<evidence type="ECO:0000269" key="13">
    <source>
    </source>
</evidence>
<evidence type="ECO:0000269" key="14">
    <source>
    </source>
</evidence>
<evidence type="ECO:0000269" key="15">
    <source>
    </source>
</evidence>
<evidence type="ECO:0000269" key="16">
    <source>
    </source>
</evidence>
<evidence type="ECO:0000269" key="17">
    <source>
    </source>
</evidence>
<evidence type="ECO:0000269" key="18">
    <source>
    </source>
</evidence>
<evidence type="ECO:0000269" key="19">
    <source>
    </source>
</evidence>
<evidence type="ECO:0000269" key="20">
    <source>
    </source>
</evidence>
<evidence type="ECO:0000269" key="21">
    <source>
    </source>
</evidence>
<evidence type="ECO:0000269" key="22">
    <source>
    </source>
</evidence>
<evidence type="ECO:0000269" key="23">
    <source>
    </source>
</evidence>
<evidence type="ECO:0000269" key="24">
    <source>
    </source>
</evidence>
<evidence type="ECO:0000269" key="25">
    <source>
    </source>
</evidence>
<evidence type="ECO:0000305" key="26"/>
<evidence type="ECO:0007829" key="27">
    <source>
        <dbReference type="PDB" id="2PM6"/>
    </source>
</evidence>
<evidence type="ECO:0007829" key="28">
    <source>
        <dbReference type="PDB" id="2PM7"/>
    </source>
</evidence>
<evidence type="ECO:0007829" key="29">
    <source>
        <dbReference type="PDB" id="3IKO"/>
    </source>
</evidence>
<evidence type="ECO:0007829" key="30">
    <source>
        <dbReference type="PDB" id="3JRP"/>
    </source>
</evidence>
<evidence type="ECO:0007829" key="31">
    <source>
        <dbReference type="PDB" id="3MZK"/>
    </source>
</evidence>
<evidence type="ECO:0007829" key="32">
    <source>
        <dbReference type="PDB" id="8ADL"/>
    </source>
</evidence>
<feature type="chain" id="PRO_0000051206" description="Protein transport protein SEC13">
    <location>
        <begin position="1"/>
        <end position="297"/>
    </location>
</feature>
<feature type="repeat" description="WD 1">
    <location>
        <begin position="7"/>
        <end position="46"/>
    </location>
</feature>
<feature type="repeat" description="WD 2">
    <location>
        <begin position="51"/>
        <end position="92"/>
    </location>
</feature>
<feature type="repeat" description="WD 3">
    <location>
        <begin position="97"/>
        <end position="138"/>
    </location>
</feature>
<feature type="repeat" description="WD 4">
    <location>
        <begin position="143"/>
        <end position="195"/>
    </location>
</feature>
<feature type="repeat" description="WD 5">
    <location>
        <begin position="202"/>
        <end position="244"/>
    </location>
</feature>
<feature type="repeat" description="WD 6">
    <location>
        <begin position="252"/>
        <end position="291"/>
    </location>
</feature>
<feature type="mutagenesis site" description="Leads to mislocalization of NPCs and overproliferation of the nuclear and ER membranes at 34 degrees Celsius." evidence="8">
    <original>G</original>
    <variation>R</variation>
    <location>
        <position position="176"/>
    </location>
</feature>
<feature type="mutagenesis site" description="Growth inhibited above 30 degrees Celsius." evidence="16">
    <original>S</original>
    <variation>K</variation>
    <location>
        <position position="224"/>
    </location>
</feature>
<feature type="mutagenesis site" description="Growth inhibited above 30 degrees Celsius." evidence="16">
    <original>W</original>
    <variation>R</variation>
    <location>
        <position position="262"/>
    </location>
</feature>
<feature type="mutagenesis site" description="Growth inhibited above 34 degrees Celsius." evidence="16">
    <original>G</original>
    <variation>D</variation>
    <location>
        <position position="266"/>
    </location>
</feature>
<feature type="strand" evidence="31">
    <location>
        <begin position="2"/>
        <end position="4"/>
    </location>
</feature>
<feature type="strand" evidence="30">
    <location>
        <begin position="5"/>
        <end position="7"/>
    </location>
</feature>
<feature type="strand" evidence="28">
    <location>
        <begin position="12"/>
        <end position="17"/>
    </location>
</feature>
<feature type="strand" evidence="28">
    <location>
        <begin position="21"/>
        <end position="28"/>
    </location>
</feature>
<feature type="strand" evidence="28">
    <location>
        <begin position="33"/>
        <end position="38"/>
    </location>
</feature>
<feature type="strand" evidence="28">
    <location>
        <begin position="47"/>
        <end position="49"/>
    </location>
</feature>
<feature type="strand" evidence="28">
    <location>
        <begin position="56"/>
        <end position="61"/>
    </location>
</feature>
<feature type="helix" evidence="28">
    <location>
        <begin position="64"/>
        <end position="66"/>
    </location>
</feature>
<feature type="strand" evidence="28">
    <location>
        <begin position="68"/>
        <end position="74"/>
    </location>
</feature>
<feature type="strand" evidence="28">
    <location>
        <begin position="79"/>
        <end position="87"/>
    </location>
</feature>
<feature type="strand" evidence="28">
    <location>
        <begin position="93"/>
        <end position="95"/>
    </location>
</feature>
<feature type="strand" evidence="29">
    <location>
        <begin position="98"/>
        <end position="100"/>
    </location>
</feature>
<feature type="strand" evidence="28">
    <location>
        <begin position="102"/>
        <end position="107"/>
    </location>
</feature>
<feature type="helix" evidence="28">
    <location>
        <begin position="110"/>
        <end position="112"/>
    </location>
</feature>
<feature type="strand" evidence="28">
    <location>
        <begin position="114"/>
        <end position="120"/>
    </location>
</feature>
<feature type="strand" evidence="28">
    <location>
        <begin position="123"/>
        <end position="130"/>
    </location>
</feature>
<feature type="strand" evidence="28">
    <location>
        <begin position="132"/>
        <end position="134"/>
    </location>
</feature>
<feature type="strand" evidence="28">
    <location>
        <begin position="139"/>
        <end position="142"/>
    </location>
</feature>
<feature type="strand" evidence="28">
    <location>
        <begin position="148"/>
        <end position="153"/>
    </location>
</feature>
<feature type="strand" evidence="31">
    <location>
        <begin position="157"/>
        <end position="161"/>
    </location>
</feature>
<feature type="turn" evidence="31">
    <location>
        <begin position="162"/>
        <end position="165"/>
    </location>
</feature>
<feature type="strand" evidence="31">
    <location>
        <begin position="166"/>
        <end position="170"/>
    </location>
</feature>
<feature type="strand" evidence="28">
    <location>
        <begin position="172"/>
        <end position="177"/>
    </location>
</feature>
<feature type="strand" evidence="28">
    <location>
        <begin position="182"/>
        <end position="188"/>
    </location>
</feature>
<feature type="turn" evidence="28">
    <location>
        <begin position="189"/>
        <end position="192"/>
    </location>
</feature>
<feature type="strand" evidence="28">
    <location>
        <begin position="193"/>
        <end position="200"/>
    </location>
</feature>
<feature type="strand" evidence="28">
    <location>
        <begin position="207"/>
        <end position="212"/>
    </location>
</feature>
<feature type="strand" evidence="28">
    <location>
        <begin position="217"/>
        <end position="226"/>
    </location>
</feature>
<feature type="strand" evidence="29">
    <location>
        <begin position="227"/>
        <end position="229"/>
    </location>
</feature>
<feature type="strand" evidence="28">
    <location>
        <begin position="231"/>
        <end position="238"/>
    </location>
</feature>
<feature type="strand" evidence="28">
    <location>
        <begin position="244"/>
        <end position="251"/>
    </location>
</feature>
<feature type="strand" evidence="28">
    <location>
        <begin position="257"/>
        <end position="262"/>
    </location>
</feature>
<feature type="strand" evidence="28">
    <location>
        <begin position="264"/>
        <end position="266"/>
    </location>
</feature>
<feature type="strand" evidence="28">
    <location>
        <begin position="269"/>
        <end position="273"/>
    </location>
</feature>
<feature type="strand" evidence="27">
    <location>
        <begin position="274"/>
        <end position="276"/>
    </location>
</feature>
<feature type="strand" evidence="28">
    <location>
        <begin position="278"/>
        <end position="283"/>
    </location>
</feature>
<feature type="strand" evidence="32">
    <location>
        <begin position="285"/>
        <end position="287"/>
    </location>
</feature>
<feature type="strand" evidence="28">
    <location>
        <begin position="289"/>
        <end position="291"/>
    </location>
</feature>
<comment type="function">
    <text evidence="1 2 3 5 6 7 8 9 11 12 13 14 15 17 18 19 20 21 23 24">Functions as a component of the nuclear pore complex (NPC) and the COPII coat. It is one of 5 proteins constituting the COPII coat, which is involved in anterograde (ER to Golgi) double-membrane transport vesicle formation. First the small GTPase SAR1, activated by and binding to the integral ER membrane protein SEC12, exchanges GDP for GTP and recruits the heterodimer SEC23/24, which in turn recruits the heterotetramer SEC13-SEC31. The polymerization of COPII coat complexes then causes physically the deformation (budding) of the membrane, leading to the creation of a transport vesicle. The COPII complex is dissociated upon SAR1-GTP hydrolysis to SAR1-GDP. SEC23 functions as the SAR1 GTPase activating protein, whose activity is stimulated in the presence of SEC13/31. SEC13 is directly or indirectly required for normal ER membrane and nuclear envelope morphology. It also functions as a component of the nuclear pore complex (NPC). NPC components, collectively referred to as nucleoporins (NUPs), can play the role of both NPC structural components and of docking or interaction partners for transiently associated nuclear transport factors. SEC13 is required for efficient mRNA export from the nucleus to the cytoplasm and for correct nuclear pore biogenesis and distribution. Component of the SEA complex which coats the vacuolar membrane and is involved in intracellular trafficking, autophagy, response to nitrogen starvation, and amino acid biogenesis.</text>
</comment>
<comment type="subunit">
    <text evidence="1 4 12 22 25">The basic repeat unit of a COPII coated vesicle is composed of 5 proteins: the small GTPase SAR1, the heterodimeric SEC23-SEC24 complex, and the heterotetrameric SEC13-SEC31 complex. This repeat unit polymerizes to induce membrane deformation into a transport vesicle. Component of the nuclear pore complex (NPC). NPC constitutes the exclusive means of nucleocytoplasmic transport. NPCs allow the passive diffusion of ions and small molecules and the active, nuclear transport receptor-mediated bidirectional transport of macromolecules such as proteins, RNAs, ribonucleoparticles (RNPs), and ribosomal subunits across the nuclear envelope. Due to its 8-fold rotational symmetry, all subunits are present with 8 copies or multiples thereof. SEC13 is part of the heptameric 0.5 MDa autoassembling NUP84 NPC subcomplex (NUP84, NUP85, NUP120, NUP133, NUP145C, SEC13 and SEH1). Component of the SEA complex composed of at least IML1/SEA1, RTC1/SEA2, MTC5/SEA3, NPR2, NPR3, SEA4, SEC13 and SEH1.</text>
</comment>
<comment type="interaction">
    <interactant intactId="EBI-16529">
        <id>Q04491</id>
    </interactant>
    <interactant intactId="EBI-32422">
        <id>Q03897</id>
        <label>MTC5</label>
    </interactant>
    <organismsDiffer>false</organismsDiffer>
    <experiments>6</experiments>
</comment>
<comment type="interaction">
    <interactant intactId="EBI-16529">
        <id>Q04491</id>
    </interactant>
    <interactant intactId="EBI-11730">
        <id>P49687</id>
        <label>NUP145</label>
    </interactant>
    <organismsDiffer>false</organismsDiffer>
    <experiments>25</experiments>
</comment>
<comment type="interaction">
    <interactant intactId="EBI-16529">
        <id>Q04491</id>
    </interactant>
    <interactant intactId="EBI-20524">
        <id>P38968</id>
        <label>SEC31</label>
    </interactant>
    <organismsDiffer>false</organismsDiffer>
    <experiments>7</experiments>
</comment>
<comment type="subcellular location">
    <subcellularLocation>
        <location>Cytoplasmic vesicle</location>
        <location>COPII-coated vesicle membrane</location>
        <topology>Peripheral membrane protein</topology>
        <orientation>Cytoplasmic side</orientation>
    </subcellularLocation>
    <subcellularLocation>
        <location>Endoplasmic reticulum membrane</location>
        <topology>Peripheral membrane protein</topology>
        <orientation>Cytoplasmic side</orientation>
    </subcellularLocation>
    <subcellularLocation>
        <location evidence="1">Nucleus</location>
        <location evidence="1">Nuclear pore complex</location>
    </subcellularLocation>
    <subcellularLocation>
        <location>Vacuole membrane</location>
        <topology>Peripheral membrane protein</topology>
    </subcellularLocation>
</comment>
<comment type="miscellaneous">
    <text evidence="10">Present with 21400 molecules/cell in log phase SD medium.</text>
</comment>
<comment type="similarity">
    <text evidence="26">Belongs to the WD repeat SEC13 family.</text>
</comment>